<reference key="1">
    <citation type="journal article" date="2003" name="Proc. Natl. Acad. Sci. U.S.A.">
        <title>The complete genome sequence of the Arabidopsis and tomato pathogen Pseudomonas syringae pv. tomato DC3000.</title>
        <authorList>
            <person name="Buell C.R."/>
            <person name="Joardar V."/>
            <person name="Lindeberg M."/>
            <person name="Selengut J."/>
            <person name="Paulsen I.T."/>
            <person name="Gwinn M.L."/>
            <person name="Dodson R.J."/>
            <person name="DeBoy R.T."/>
            <person name="Durkin A.S."/>
            <person name="Kolonay J.F."/>
            <person name="Madupu R."/>
            <person name="Daugherty S.C."/>
            <person name="Brinkac L.M."/>
            <person name="Beanan M.J."/>
            <person name="Haft D.H."/>
            <person name="Nelson W.C."/>
            <person name="Davidsen T.M."/>
            <person name="Zafar N."/>
            <person name="Zhou L."/>
            <person name="Liu J."/>
            <person name="Yuan Q."/>
            <person name="Khouri H.M."/>
            <person name="Fedorova N.B."/>
            <person name="Tran B."/>
            <person name="Russell D."/>
            <person name="Berry K.J."/>
            <person name="Utterback T.R."/>
            <person name="Van Aken S.E."/>
            <person name="Feldblyum T.V."/>
            <person name="D'Ascenzo M."/>
            <person name="Deng W.-L."/>
            <person name="Ramos A.R."/>
            <person name="Alfano J.R."/>
            <person name="Cartinhour S."/>
            <person name="Chatterjee A.K."/>
            <person name="Delaney T.P."/>
            <person name="Lazarowitz S.G."/>
            <person name="Martin G.B."/>
            <person name="Schneider D.J."/>
            <person name="Tang X."/>
            <person name="Bender C.L."/>
            <person name="White O."/>
            <person name="Fraser C.M."/>
            <person name="Collmer A."/>
        </authorList>
    </citation>
    <scope>NUCLEOTIDE SEQUENCE [LARGE SCALE GENOMIC DNA]</scope>
    <source>
        <strain>ATCC BAA-871 / DC3000</strain>
    </source>
</reference>
<evidence type="ECO:0000255" key="1">
    <source>
        <dbReference type="HAMAP-Rule" id="MF_00013"/>
    </source>
</evidence>
<evidence type="ECO:0000255" key="2">
    <source>
        <dbReference type="PROSITE-ProRule" id="PRU01067"/>
    </source>
</evidence>
<protein>
    <recommendedName>
        <fullName evidence="1">Octanoyltransferase</fullName>
        <ecNumber evidence="1">2.3.1.181</ecNumber>
    </recommendedName>
    <alternativeName>
        <fullName evidence="1">Lipoate-protein ligase B</fullName>
    </alternativeName>
    <alternativeName>
        <fullName evidence="1">Lipoyl/octanoyl transferase</fullName>
    </alternativeName>
    <alternativeName>
        <fullName evidence="1">Octanoyl-[acyl-carrier-protein]-protein N-octanoyltransferase</fullName>
    </alternativeName>
</protein>
<sequence>MANALGFRDLGLIDYETAWHAMQRFTDGRGREAGDEVWLVQHPPVFTQGQSGKAEHLLLPGNIPVVQVDRGGQVTYHGPGQLVAYLMLDVRRLGFGVRDLVTRIENTLIALLADYGVTAAAKADAPGVYVDGAKIASLGLRIRNGCSFHGLALNVDMDLEPFRRINPCGYAGLAMTQLSDQAGQIEFSEVSVRLRAQLVKHLDYAEQATLTGGINQYD</sequence>
<feature type="chain" id="PRO_0000062868" description="Octanoyltransferase">
    <location>
        <begin position="1"/>
        <end position="218"/>
    </location>
</feature>
<feature type="domain" description="BPL/LPL catalytic" evidence="2">
    <location>
        <begin position="31"/>
        <end position="206"/>
    </location>
</feature>
<feature type="active site" description="Acyl-thioester intermediate" evidence="1">
    <location>
        <position position="168"/>
    </location>
</feature>
<feature type="binding site" evidence="1">
    <location>
        <begin position="70"/>
        <end position="77"/>
    </location>
    <ligand>
        <name>substrate</name>
    </ligand>
</feature>
<feature type="binding site" evidence="1">
    <location>
        <begin position="137"/>
        <end position="139"/>
    </location>
    <ligand>
        <name>substrate</name>
    </ligand>
</feature>
<feature type="binding site" evidence="1">
    <location>
        <begin position="150"/>
        <end position="152"/>
    </location>
    <ligand>
        <name>substrate</name>
    </ligand>
</feature>
<feature type="site" description="Lowers pKa of active site Cys" evidence="1">
    <location>
        <position position="134"/>
    </location>
</feature>
<gene>
    <name evidence="1" type="primary">lipB</name>
    <name type="ordered locus">PSPTO_4819</name>
</gene>
<accession>Q87VW6</accession>
<keyword id="KW-0012">Acyltransferase</keyword>
<keyword id="KW-0963">Cytoplasm</keyword>
<keyword id="KW-1185">Reference proteome</keyword>
<keyword id="KW-0808">Transferase</keyword>
<name>LIPB_PSESM</name>
<proteinExistence type="inferred from homology"/>
<dbReference type="EC" id="2.3.1.181" evidence="1"/>
<dbReference type="EMBL" id="AE016853">
    <property type="protein sequence ID" value="AAO58248.1"/>
    <property type="molecule type" value="Genomic_DNA"/>
</dbReference>
<dbReference type="RefSeq" id="NP_794553.1">
    <property type="nucleotide sequence ID" value="NC_004578.1"/>
</dbReference>
<dbReference type="RefSeq" id="WP_007244676.1">
    <property type="nucleotide sequence ID" value="NC_004578.1"/>
</dbReference>
<dbReference type="SMR" id="Q87VW6"/>
<dbReference type="STRING" id="223283.PSPTO_4819"/>
<dbReference type="GeneID" id="1186502"/>
<dbReference type="KEGG" id="pst:PSPTO_4819"/>
<dbReference type="PATRIC" id="fig|223283.9.peg.4929"/>
<dbReference type="eggNOG" id="COG0321">
    <property type="taxonomic scope" value="Bacteria"/>
</dbReference>
<dbReference type="HOGENOM" id="CLU_035168_3_1_6"/>
<dbReference type="OrthoDB" id="9787061at2"/>
<dbReference type="PhylomeDB" id="Q87VW6"/>
<dbReference type="UniPathway" id="UPA00538">
    <property type="reaction ID" value="UER00592"/>
</dbReference>
<dbReference type="Proteomes" id="UP000002515">
    <property type="component" value="Chromosome"/>
</dbReference>
<dbReference type="GO" id="GO:0005737">
    <property type="term" value="C:cytoplasm"/>
    <property type="evidence" value="ECO:0007669"/>
    <property type="project" value="UniProtKB-SubCell"/>
</dbReference>
<dbReference type="GO" id="GO:0033819">
    <property type="term" value="F:lipoyl(octanoyl) transferase activity"/>
    <property type="evidence" value="ECO:0007669"/>
    <property type="project" value="UniProtKB-EC"/>
</dbReference>
<dbReference type="GO" id="GO:0036211">
    <property type="term" value="P:protein modification process"/>
    <property type="evidence" value="ECO:0007669"/>
    <property type="project" value="InterPro"/>
</dbReference>
<dbReference type="CDD" id="cd16444">
    <property type="entry name" value="LipB"/>
    <property type="match status" value="1"/>
</dbReference>
<dbReference type="FunFam" id="3.30.930.10:FF:000020">
    <property type="entry name" value="Octanoyltransferase"/>
    <property type="match status" value="1"/>
</dbReference>
<dbReference type="Gene3D" id="3.30.930.10">
    <property type="entry name" value="Bira Bifunctional Protein, Domain 2"/>
    <property type="match status" value="1"/>
</dbReference>
<dbReference type="HAMAP" id="MF_00013">
    <property type="entry name" value="LipB"/>
    <property type="match status" value="1"/>
</dbReference>
<dbReference type="InterPro" id="IPR045864">
    <property type="entry name" value="aa-tRNA-synth_II/BPL/LPL"/>
</dbReference>
<dbReference type="InterPro" id="IPR004143">
    <property type="entry name" value="BPL_LPL_catalytic"/>
</dbReference>
<dbReference type="InterPro" id="IPR000544">
    <property type="entry name" value="Octanoyltransferase"/>
</dbReference>
<dbReference type="InterPro" id="IPR020605">
    <property type="entry name" value="Octanoyltransferase_CS"/>
</dbReference>
<dbReference type="NCBIfam" id="TIGR00214">
    <property type="entry name" value="lipB"/>
    <property type="match status" value="1"/>
</dbReference>
<dbReference type="NCBIfam" id="NF010922">
    <property type="entry name" value="PRK14342.1"/>
    <property type="match status" value="1"/>
</dbReference>
<dbReference type="NCBIfam" id="NF010925">
    <property type="entry name" value="PRK14345.1"/>
    <property type="match status" value="1"/>
</dbReference>
<dbReference type="PANTHER" id="PTHR10993:SF7">
    <property type="entry name" value="LIPOYLTRANSFERASE 2, MITOCHONDRIAL-RELATED"/>
    <property type="match status" value="1"/>
</dbReference>
<dbReference type="PANTHER" id="PTHR10993">
    <property type="entry name" value="OCTANOYLTRANSFERASE"/>
    <property type="match status" value="1"/>
</dbReference>
<dbReference type="Pfam" id="PF21948">
    <property type="entry name" value="LplA-B_cat"/>
    <property type="match status" value="1"/>
</dbReference>
<dbReference type="PIRSF" id="PIRSF016262">
    <property type="entry name" value="LPLase"/>
    <property type="match status" value="1"/>
</dbReference>
<dbReference type="SUPFAM" id="SSF55681">
    <property type="entry name" value="Class II aaRS and biotin synthetases"/>
    <property type="match status" value="1"/>
</dbReference>
<dbReference type="PROSITE" id="PS51733">
    <property type="entry name" value="BPL_LPL_CATALYTIC"/>
    <property type="match status" value="1"/>
</dbReference>
<dbReference type="PROSITE" id="PS01313">
    <property type="entry name" value="LIPB"/>
    <property type="match status" value="1"/>
</dbReference>
<organism>
    <name type="scientific">Pseudomonas syringae pv. tomato (strain ATCC BAA-871 / DC3000)</name>
    <dbReference type="NCBI Taxonomy" id="223283"/>
    <lineage>
        <taxon>Bacteria</taxon>
        <taxon>Pseudomonadati</taxon>
        <taxon>Pseudomonadota</taxon>
        <taxon>Gammaproteobacteria</taxon>
        <taxon>Pseudomonadales</taxon>
        <taxon>Pseudomonadaceae</taxon>
        <taxon>Pseudomonas</taxon>
    </lineage>
</organism>
<comment type="function">
    <text evidence="1">Catalyzes the transfer of endogenously produced octanoic acid from octanoyl-acyl-carrier-protein onto the lipoyl domains of lipoate-dependent enzymes. Lipoyl-ACP can also act as a substrate although octanoyl-ACP is likely to be the physiological substrate.</text>
</comment>
<comment type="catalytic activity">
    <reaction evidence="1">
        <text>octanoyl-[ACP] + L-lysyl-[protein] = N(6)-octanoyl-L-lysyl-[protein] + holo-[ACP] + H(+)</text>
        <dbReference type="Rhea" id="RHEA:17665"/>
        <dbReference type="Rhea" id="RHEA-COMP:9636"/>
        <dbReference type="Rhea" id="RHEA-COMP:9685"/>
        <dbReference type="Rhea" id="RHEA-COMP:9752"/>
        <dbReference type="Rhea" id="RHEA-COMP:9928"/>
        <dbReference type="ChEBI" id="CHEBI:15378"/>
        <dbReference type="ChEBI" id="CHEBI:29969"/>
        <dbReference type="ChEBI" id="CHEBI:64479"/>
        <dbReference type="ChEBI" id="CHEBI:78463"/>
        <dbReference type="ChEBI" id="CHEBI:78809"/>
        <dbReference type="EC" id="2.3.1.181"/>
    </reaction>
</comment>
<comment type="pathway">
    <text evidence="1">Protein modification; protein lipoylation via endogenous pathway; protein N(6)-(lipoyl)lysine from octanoyl-[acyl-carrier-protein]: step 1/2.</text>
</comment>
<comment type="subcellular location">
    <subcellularLocation>
        <location evidence="1">Cytoplasm</location>
    </subcellularLocation>
</comment>
<comment type="miscellaneous">
    <text evidence="1">In the reaction, the free carboxyl group of octanoic acid is attached via an amide linkage to the epsilon-amino group of a specific lysine residue of lipoyl domains of lipoate-dependent enzymes.</text>
</comment>
<comment type="similarity">
    <text evidence="1">Belongs to the LipB family.</text>
</comment>